<organism>
    <name type="scientific">Streptococcus pneumoniae serotype 19F (strain G54)</name>
    <dbReference type="NCBI Taxonomy" id="512566"/>
    <lineage>
        <taxon>Bacteria</taxon>
        <taxon>Bacillati</taxon>
        <taxon>Bacillota</taxon>
        <taxon>Bacilli</taxon>
        <taxon>Lactobacillales</taxon>
        <taxon>Streptococcaceae</taxon>
        <taxon>Streptococcus</taxon>
    </lineage>
</organism>
<gene>
    <name evidence="1" type="primary">coaD</name>
    <name type="ordered locus">SPG_1870</name>
</gene>
<reference key="1">
    <citation type="journal article" date="2001" name="Microb. Drug Resist.">
        <title>Annotated draft genomic sequence from a Streptococcus pneumoniae type 19F clinical isolate.</title>
        <authorList>
            <person name="Dopazo J."/>
            <person name="Mendoza A."/>
            <person name="Herrero J."/>
            <person name="Caldara F."/>
            <person name="Humbert Y."/>
            <person name="Friedli L."/>
            <person name="Guerrier M."/>
            <person name="Grand-Schenk E."/>
            <person name="Gandin C."/>
            <person name="de Francesco M."/>
            <person name="Polissi A."/>
            <person name="Buell G."/>
            <person name="Feger G."/>
            <person name="Garcia E."/>
            <person name="Peitsch M."/>
            <person name="Garcia-Bustos J.F."/>
        </authorList>
    </citation>
    <scope>NUCLEOTIDE SEQUENCE [LARGE SCALE GENOMIC DNA]</scope>
    <source>
        <strain>G54</strain>
    </source>
</reference>
<reference key="2">
    <citation type="submission" date="2008-03" db="EMBL/GenBank/DDBJ databases">
        <title>Pneumococcal beta glucoside metabolism investigated by whole genome comparison.</title>
        <authorList>
            <person name="Mulas L."/>
            <person name="Trappetti C."/>
            <person name="Hakenbeck R."/>
            <person name="Iannelli F."/>
            <person name="Pozzi G."/>
            <person name="Davidsen T.M."/>
            <person name="Tettelin H."/>
            <person name="Oggioni M."/>
        </authorList>
    </citation>
    <scope>NUCLEOTIDE SEQUENCE [LARGE SCALE GENOMIC DNA]</scope>
    <source>
        <strain>G54</strain>
    </source>
</reference>
<sequence length="162" mass="18472">MSDKIGLFTGSFDPMTNGHLDIIERASRLFDKLYVGIFFNPHKQGFLPLENRKRGLEKALGHLENVEVVASHDKLVVDVAKRLGATFLVRGLRNAADLQYEASFDYYNHQLSSDIETIYLHSRPEHLYISSSGVRELLKFGQDIACHVPESILEEIRNEKKD</sequence>
<feature type="chain" id="PRO_1000096846" description="Phosphopantetheine adenylyltransferase">
    <location>
        <begin position="1"/>
        <end position="162"/>
    </location>
</feature>
<feature type="binding site" evidence="1">
    <location>
        <begin position="11"/>
        <end position="12"/>
    </location>
    <ligand>
        <name>ATP</name>
        <dbReference type="ChEBI" id="CHEBI:30616"/>
    </ligand>
</feature>
<feature type="binding site" evidence="1">
    <location>
        <position position="11"/>
    </location>
    <ligand>
        <name>substrate</name>
    </ligand>
</feature>
<feature type="binding site" evidence="1">
    <location>
        <position position="19"/>
    </location>
    <ligand>
        <name>ATP</name>
        <dbReference type="ChEBI" id="CHEBI:30616"/>
    </ligand>
</feature>
<feature type="binding site" evidence="1">
    <location>
        <position position="43"/>
    </location>
    <ligand>
        <name>substrate</name>
    </ligand>
</feature>
<feature type="binding site" evidence="1">
    <location>
        <position position="76"/>
    </location>
    <ligand>
        <name>substrate</name>
    </ligand>
</feature>
<feature type="binding site" evidence="1">
    <location>
        <position position="90"/>
    </location>
    <ligand>
        <name>substrate</name>
    </ligand>
</feature>
<feature type="binding site" evidence="1">
    <location>
        <begin position="91"/>
        <end position="93"/>
    </location>
    <ligand>
        <name>ATP</name>
        <dbReference type="ChEBI" id="CHEBI:30616"/>
    </ligand>
</feature>
<feature type="binding site" evidence="1">
    <location>
        <position position="101"/>
    </location>
    <ligand>
        <name>ATP</name>
        <dbReference type="ChEBI" id="CHEBI:30616"/>
    </ligand>
</feature>
<feature type="binding site" evidence="1">
    <location>
        <begin position="126"/>
        <end position="132"/>
    </location>
    <ligand>
        <name>ATP</name>
        <dbReference type="ChEBI" id="CHEBI:30616"/>
    </ligand>
</feature>
<feature type="site" description="Transition state stabilizer" evidence="1">
    <location>
        <position position="19"/>
    </location>
</feature>
<name>COAD_STRP4</name>
<accession>B5E2G0</accession>
<protein>
    <recommendedName>
        <fullName evidence="1">Phosphopantetheine adenylyltransferase</fullName>
        <ecNumber evidence="1">2.7.7.3</ecNumber>
    </recommendedName>
    <alternativeName>
        <fullName evidence="1">Dephospho-CoA pyrophosphorylase</fullName>
    </alternativeName>
    <alternativeName>
        <fullName evidence="1">Pantetheine-phosphate adenylyltransferase</fullName>
        <shortName evidence="1">PPAT</shortName>
    </alternativeName>
</protein>
<comment type="function">
    <text evidence="1">Reversibly transfers an adenylyl group from ATP to 4'-phosphopantetheine, yielding dephospho-CoA (dPCoA) and pyrophosphate.</text>
</comment>
<comment type="catalytic activity">
    <reaction evidence="1">
        <text>(R)-4'-phosphopantetheine + ATP + H(+) = 3'-dephospho-CoA + diphosphate</text>
        <dbReference type="Rhea" id="RHEA:19801"/>
        <dbReference type="ChEBI" id="CHEBI:15378"/>
        <dbReference type="ChEBI" id="CHEBI:30616"/>
        <dbReference type="ChEBI" id="CHEBI:33019"/>
        <dbReference type="ChEBI" id="CHEBI:57328"/>
        <dbReference type="ChEBI" id="CHEBI:61723"/>
        <dbReference type="EC" id="2.7.7.3"/>
    </reaction>
</comment>
<comment type="cofactor">
    <cofactor evidence="1">
        <name>Mg(2+)</name>
        <dbReference type="ChEBI" id="CHEBI:18420"/>
    </cofactor>
</comment>
<comment type="pathway">
    <text evidence="1">Cofactor biosynthesis; coenzyme A biosynthesis; CoA from (R)-pantothenate: step 4/5.</text>
</comment>
<comment type="subunit">
    <text evidence="1">Homohexamer.</text>
</comment>
<comment type="subcellular location">
    <subcellularLocation>
        <location evidence="1">Cytoplasm</location>
    </subcellularLocation>
</comment>
<comment type="similarity">
    <text evidence="1">Belongs to the bacterial CoaD family.</text>
</comment>
<dbReference type="EC" id="2.7.7.3" evidence="1"/>
<dbReference type="EMBL" id="CP001015">
    <property type="protein sequence ID" value="ACF56021.1"/>
    <property type="molecule type" value="Genomic_DNA"/>
</dbReference>
<dbReference type="SMR" id="B5E2G0"/>
<dbReference type="KEGG" id="spx:SPG_1870"/>
<dbReference type="HOGENOM" id="CLU_100149_0_1_9"/>
<dbReference type="UniPathway" id="UPA00241">
    <property type="reaction ID" value="UER00355"/>
</dbReference>
<dbReference type="GO" id="GO:0005737">
    <property type="term" value="C:cytoplasm"/>
    <property type="evidence" value="ECO:0007669"/>
    <property type="project" value="UniProtKB-SubCell"/>
</dbReference>
<dbReference type="GO" id="GO:0005524">
    <property type="term" value="F:ATP binding"/>
    <property type="evidence" value="ECO:0007669"/>
    <property type="project" value="UniProtKB-KW"/>
</dbReference>
<dbReference type="GO" id="GO:0004595">
    <property type="term" value="F:pantetheine-phosphate adenylyltransferase activity"/>
    <property type="evidence" value="ECO:0007669"/>
    <property type="project" value="UniProtKB-UniRule"/>
</dbReference>
<dbReference type="GO" id="GO:0015937">
    <property type="term" value="P:coenzyme A biosynthetic process"/>
    <property type="evidence" value="ECO:0007669"/>
    <property type="project" value="UniProtKB-UniRule"/>
</dbReference>
<dbReference type="CDD" id="cd02163">
    <property type="entry name" value="PPAT"/>
    <property type="match status" value="1"/>
</dbReference>
<dbReference type="Gene3D" id="3.40.50.620">
    <property type="entry name" value="HUPs"/>
    <property type="match status" value="1"/>
</dbReference>
<dbReference type="HAMAP" id="MF_00151">
    <property type="entry name" value="PPAT_bact"/>
    <property type="match status" value="1"/>
</dbReference>
<dbReference type="InterPro" id="IPR004821">
    <property type="entry name" value="Cyt_trans-like"/>
</dbReference>
<dbReference type="InterPro" id="IPR001980">
    <property type="entry name" value="PPAT"/>
</dbReference>
<dbReference type="InterPro" id="IPR014729">
    <property type="entry name" value="Rossmann-like_a/b/a_fold"/>
</dbReference>
<dbReference type="NCBIfam" id="TIGR01510">
    <property type="entry name" value="coaD_prev_kdtB"/>
    <property type="match status" value="1"/>
</dbReference>
<dbReference type="NCBIfam" id="TIGR00125">
    <property type="entry name" value="cyt_tran_rel"/>
    <property type="match status" value="1"/>
</dbReference>
<dbReference type="PANTHER" id="PTHR21342">
    <property type="entry name" value="PHOSPHOPANTETHEINE ADENYLYLTRANSFERASE"/>
    <property type="match status" value="1"/>
</dbReference>
<dbReference type="PANTHER" id="PTHR21342:SF1">
    <property type="entry name" value="PHOSPHOPANTETHEINE ADENYLYLTRANSFERASE"/>
    <property type="match status" value="1"/>
</dbReference>
<dbReference type="Pfam" id="PF01467">
    <property type="entry name" value="CTP_transf_like"/>
    <property type="match status" value="1"/>
</dbReference>
<dbReference type="PRINTS" id="PR01020">
    <property type="entry name" value="LPSBIOSNTHSS"/>
</dbReference>
<dbReference type="SUPFAM" id="SSF52374">
    <property type="entry name" value="Nucleotidylyl transferase"/>
    <property type="match status" value="1"/>
</dbReference>
<keyword id="KW-0067">ATP-binding</keyword>
<keyword id="KW-0173">Coenzyme A biosynthesis</keyword>
<keyword id="KW-0963">Cytoplasm</keyword>
<keyword id="KW-0460">Magnesium</keyword>
<keyword id="KW-0547">Nucleotide-binding</keyword>
<keyword id="KW-0548">Nucleotidyltransferase</keyword>
<keyword id="KW-0808">Transferase</keyword>
<evidence type="ECO:0000255" key="1">
    <source>
        <dbReference type="HAMAP-Rule" id="MF_00151"/>
    </source>
</evidence>
<proteinExistence type="inferred from homology"/>